<feature type="propeptide" id="PRO_0000428851" evidence="1">
    <location>
        <begin position="1"/>
        <end position="20"/>
    </location>
</feature>
<feature type="chain" id="PRO_0000428852" description="Halorhodopsin">
    <location>
        <begin position="21"/>
        <end position="276"/>
    </location>
</feature>
<feature type="transmembrane region" description="Helical" evidence="2">
    <location>
        <begin position="31"/>
        <end position="51"/>
    </location>
</feature>
<feature type="transmembrane region" description="Helical" evidence="2">
    <location>
        <begin position="61"/>
        <end position="81"/>
    </location>
</feature>
<feature type="transmembrane region" description="Helical" evidence="2">
    <location>
        <begin position="109"/>
        <end position="129"/>
    </location>
</feature>
<feature type="transmembrane region" description="Helical" evidence="2">
    <location>
        <begin position="134"/>
        <end position="154"/>
    </location>
</feature>
<feature type="transmembrane region" description="Helical" evidence="2">
    <location>
        <begin position="162"/>
        <end position="182"/>
    </location>
</feature>
<feature type="transmembrane region" description="Helical" evidence="2">
    <location>
        <begin position="195"/>
        <end position="215"/>
    </location>
</feature>
<feature type="transmembrane region" description="Helical" evidence="2">
    <location>
        <begin position="220"/>
        <end position="240"/>
    </location>
</feature>
<feature type="modified residue" description="Pyrrolidone carboxylic acid" evidence="1">
    <location>
        <position position="21"/>
    </location>
</feature>
<feature type="modified residue" description="N6-(retinylidene)lysine" evidence="1">
    <location>
        <position position="241"/>
    </location>
</feature>
<accession>Q5V1N0</accession>
<organism>
    <name type="scientific">Haloarcula marismortui (strain ATCC 43049 / DSM 3752 / JCM 8966 / VKM B-1809)</name>
    <name type="common">Halobacterium marismortui</name>
    <dbReference type="NCBI Taxonomy" id="272569"/>
    <lineage>
        <taxon>Archaea</taxon>
        <taxon>Methanobacteriati</taxon>
        <taxon>Methanobacteriota</taxon>
        <taxon>Stenosarchaea group</taxon>
        <taxon>Halobacteria</taxon>
        <taxon>Halobacteriales</taxon>
        <taxon>Haloarculaceae</taxon>
        <taxon>Haloarcula</taxon>
    </lineage>
</organism>
<gene>
    <name type="primary">hop</name>
    <name type="ordered locus">rrnAC1659</name>
</gene>
<dbReference type="EMBL" id="AY596297">
    <property type="protein sequence ID" value="AAV46572.1"/>
    <property type="molecule type" value="Genomic_DNA"/>
</dbReference>
<dbReference type="RefSeq" id="WP_011223771.1">
    <property type="nucleotide sequence ID" value="NC_006396.1"/>
</dbReference>
<dbReference type="SMR" id="Q5V1N0"/>
<dbReference type="STRING" id="272569.rrnAC1659"/>
<dbReference type="PaxDb" id="272569-rrnAC1659"/>
<dbReference type="EnsemblBacteria" id="AAV46572">
    <property type="protein sequence ID" value="AAV46572"/>
    <property type="gene ID" value="rrnAC1659"/>
</dbReference>
<dbReference type="GeneID" id="40152624"/>
<dbReference type="KEGG" id="hma:rrnAC1659"/>
<dbReference type="PATRIC" id="fig|272569.17.peg.2347"/>
<dbReference type="eggNOG" id="arCOG02811">
    <property type="taxonomic scope" value="Archaea"/>
</dbReference>
<dbReference type="HOGENOM" id="CLU_054785_5_1_2"/>
<dbReference type="Proteomes" id="UP000001169">
    <property type="component" value="Chromosome I"/>
</dbReference>
<dbReference type="GO" id="GO:0016020">
    <property type="term" value="C:membrane"/>
    <property type="evidence" value="ECO:0007669"/>
    <property type="project" value="UniProtKB-SubCell"/>
</dbReference>
<dbReference type="GO" id="GO:0005216">
    <property type="term" value="F:monoatomic ion channel activity"/>
    <property type="evidence" value="ECO:0007669"/>
    <property type="project" value="InterPro"/>
</dbReference>
<dbReference type="GO" id="GO:0009881">
    <property type="term" value="F:photoreceptor activity"/>
    <property type="evidence" value="ECO:0007669"/>
    <property type="project" value="UniProtKB-KW"/>
</dbReference>
<dbReference type="GO" id="GO:0007602">
    <property type="term" value="P:phototransduction"/>
    <property type="evidence" value="ECO:0007669"/>
    <property type="project" value="UniProtKB-KW"/>
</dbReference>
<dbReference type="CDD" id="cd15243">
    <property type="entry name" value="7tm_Halorhodopsin"/>
    <property type="match status" value="1"/>
</dbReference>
<dbReference type="Gene3D" id="1.20.1070.10">
    <property type="entry name" value="Rhodopsin 7-helix transmembrane proteins"/>
    <property type="match status" value="1"/>
</dbReference>
<dbReference type="InterPro" id="IPR001425">
    <property type="entry name" value="Arc/bac/fun_rhodopsins"/>
</dbReference>
<dbReference type="InterPro" id="IPR018229">
    <property type="entry name" value="Rhodopsin_retinal_BS"/>
</dbReference>
<dbReference type="PANTHER" id="PTHR28286">
    <property type="match status" value="1"/>
</dbReference>
<dbReference type="PANTHER" id="PTHR28286:SF2">
    <property type="entry name" value="BACTERIORHODOPSIN _OPSIN, NOPA (EUROFUNG)"/>
    <property type="match status" value="1"/>
</dbReference>
<dbReference type="Pfam" id="PF01036">
    <property type="entry name" value="Bac_rhodopsin"/>
    <property type="match status" value="1"/>
</dbReference>
<dbReference type="PRINTS" id="PR00251">
    <property type="entry name" value="BACTRLOPSIN"/>
</dbReference>
<dbReference type="SMART" id="SM01021">
    <property type="entry name" value="Bac_rhodopsin"/>
    <property type="match status" value="1"/>
</dbReference>
<dbReference type="SUPFAM" id="SSF81321">
    <property type="entry name" value="Family A G protein-coupled receptor-like"/>
    <property type="match status" value="1"/>
</dbReference>
<dbReference type="PROSITE" id="PS00950">
    <property type="entry name" value="BACTERIAL_OPSIN_1"/>
    <property type="match status" value="1"/>
</dbReference>
<dbReference type="PROSITE" id="PS00327">
    <property type="entry name" value="BACTERIAL_OPSIN_RET"/>
    <property type="match status" value="1"/>
</dbReference>
<proteinExistence type="evidence at protein level"/>
<name>BACH_HALMA</name>
<sequence length="276" mass="29043">MTAASTTATTVLQATQSDVLQEIQSNFLLNSSIWVNIALAGVVILLFVAMGRDLESPRAKLIWVATMLVPLVSISSYAGLASGLTVGFLQMPPGHALAGQEVLSPWGRYLTWTFSTPMILLALGLLADTDIASLFTAITMDIGMCVTGLAAALITSSHLLRWVFYGISCAFFVAVLYVLLVQWPADAEAAGTSEIFGTLKILTVVLWLGYPILWALGSEGVALLSVGVTSWGYSGLDILAKYVFAFLLLRWVAANEGTVSGSGMGIGSGGATPADD</sequence>
<evidence type="ECO:0000250" key="1"/>
<evidence type="ECO:0000255" key="2"/>
<evidence type="ECO:0000269" key="3">
    <source>
    </source>
</evidence>
<evidence type="ECO:0000305" key="4"/>
<keyword id="KW-0157">Chromophore</keyword>
<keyword id="KW-0406">Ion transport</keyword>
<keyword id="KW-0472">Membrane</keyword>
<keyword id="KW-0600">Photoreceptor protein</keyword>
<keyword id="KW-0873">Pyrrolidone carboxylic acid</keyword>
<keyword id="KW-0675">Receptor</keyword>
<keyword id="KW-1185">Reference proteome</keyword>
<keyword id="KW-0681">Retinal protein</keyword>
<keyword id="KW-0716">Sensory transduction</keyword>
<keyword id="KW-0812">Transmembrane</keyword>
<keyword id="KW-1133">Transmembrane helix</keyword>
<keyword id="KW-0813">Transport</keyword>
<protein>
    <recommendedName>
        <fullName>Halorhodopsin</fullName>
        <shortName>HmHR</shortName>
    </recommendedName>
</protein>
<comment type="function">
    <text evidence="3">Light-driven chloride pump.</text>
</comment>
<comment type="biophysicochemical properties">
    <absorption>
        <max evidence="3">576 nm</max>
        <text>If the chloride concentration decreases, the spectrum exhibits a red-shift.</text>
    </absorption>
</comment>
<comment type="subcellular location">
    <subcellularLocation>
        <location evidence="4">Membrane</location>
        <topology evidence="4">Multi-pass membrane protein</topology>
    </subcellularLocation>
</comment>
<comment type="induction">
    <text evidence="3">Expressed constitutively throughout the growth phases, both in presence and absence of white light.</text>
</comment>
<comment type="PTM">
    <text evidence="1">The covalent binding of retinal to the apoprotein, bacterioopsin, generates bacteriorhodopsin.</text>
</comment>
<comment type="similarity">
    <text evidence="4">Belongs to the archaeal/bacterial/fungal opsin family.</text>
</comment>
<reference key="1">
    <citation type="journal article" date="2004" name="Genome Res.">
        <title>Genome sequence of Haloarcula marismortui: a halophilic archaeon from the Dead Sea.</title>
        <authorList>
            <person name="Baliga N.S."/>
            <person name="Bonneau R."/>
            <person name="Facciotti M.T."/>
            <person name="Pan M."/>
            <person name="Glusman G."/>
            <person name="Deutsch E.W."/>
            <person name="Shannon P."/>
            <person name="Chiu Y."/>
            <person name="Weng R.S."/>
            <person name="Gan R.R."/>
            <person name="Hung P."/>
            <person name="Date S.V."/>
            <person name="Marcotte E."/>
            <person name="Hood L."/>
            <person name="Ng W.V."/>
        </authorList>
    </citation>
    <scope>NUCLEOTIDE SEQUENCE [LARGE SCALE GENOMIC DNA]</scope>
    <source>
        <strain>ATCC 43049 / DSM 3752 / JCM 8966 / VKM B-1809</strain>
    </source>
</reference>
<reference key="2">
    <citation type="journal article" date="2010" name="J. Bacteriol.">
        <title>A novel six-rhodopsin system in a single archaeon.</title>
        <authorList>
            <person name="Fu H.Y."/>
            <person name="Lin Y.C."/>
            <person name="Chang Y.N."/>
            <person name="Tseng H."/>
            <person name="Huang C.C."/>
            <person name="Liu K.C."/>
            <person name="Huang C.S."/>
            <person name="Su C.W."/>
            <person name="Weng R.R."/>
            <person name="Lee Y.Y."/>
            <person name="Ng W.V."/>
            <person name="Yang C.S."/>
        </authorList>
    </citation>
    <scope>FUNCTION</scope>
    <scope>INDUCTION</scope>
    <scope>CHARACTERIZATION</scope>
    <scope>BIOPHYSICOCHEMICAL PROPERTIES</scope>
</reference>